<proteinExistence type="inferred from homology"/>
<protein>
    <recommendedName>
        <fullName evidence="1">UPF0735 ACT domain-containing protein SAR1723</fullName>
    </recommendedName>
</protein>
<dbReference type="EMBL" id="BX571856">
    <property type="protein sequence ID" value="CAG40714.1"/>
    <property type="molecule type" value="Genomic_DNA"/>
</dbReference>
<dbReference type="KEGG" id="sar:SAR1723"/>
<dbReference type="HOGENOM" id="CLU_128147_0_0_9"/>
<dbReference type="Proteomes" id="UP000000596">
    <property type="component" value="Chromosome"/>
</dbReference>
<dbReference type="Gene3D" id="3.30.70.260">
    <property type="match status" value="1"/>
</dbReference>
<dbReference type="HAMAP" id="MF_00707">
    <property type="entry name" value="UPF0735"/>
    <property type="match status" value="1"/>
</dbReference>
<dbReference type="InterPro" id="IPR045865">
    <property type="entry name" value="ACT-like_dom_sf"/>
</dbReference>
<dbReference type="InterPro" id="IPR002912">
    <property type="entry name" value="ACT_dom"/>
</dbReference>
<dbReference type="InterPro" id="IPR008310">
    <property type="entry name" value="UPF0735_ACT_dom-cont"/>
</dbReference>
<dbReference type="NCBIfam" id="NF003361">
    <property type="entry name" value="PRK04435.1"/>
    <property type="match status" value="1"/>
</dbReference>
<dbReference type="PIRSF" id="PIRSF025624">
    <property type="entry name" value="ACT_PheB"/>
    <property type="match status" value="1"/>
</dbReference>
<dbReference type="SUPFAM" id="SSF55021">
    <property type="entry name" value="ACT-like"/>
    <property type="match status" value="1"/>
</dbReference>
<dbReference type="PROSITE" id="PS51671">
    <property type="entry name" value="ACT"/>
    <property type="match status" value="1"/>
</dbReference>
<evidence type="ECO:0000255" key="1">
    <source>
        <dbReference type="HAMAP-Rule" id="MF_00707"/>
    </source>
</evidence>
<gene>
    <name type="ordered locus">SAR1723</name>
</gene>
<name>Y1723_STAAR</name>
<sequence>MMDNKDYKKFYLIREDVLPESVVKTLKIKDALKSDPTLSIYDAVKQFDLSRSAFYKYRETIFPVDDKMLDHREFTLILYVTDIVGMLARVLDVISKLELSVLTIHQSIPMEEKATITLSLNAKSKETSVEDVIGALRNLDYVSKVELISMSM</sequence>
<accession>Q6GG61</accession>
<reference key="1">
    <citation type="journal article" date="2004" name="Proc. Natl. Acad. Sci. U.S.A.">
        <title>Complete genomes of two clinical Staphylococcus aureus strains: evidence for the rapid evolution of virulence and drug resistance.</title>
        <authorList>
            <person name="Holden M.T.G."/>
            <person name="Feil E.J."/>
            <person name="Lindsay J.A."/>
            <person name="Peacock S.J."/>
            <person name="Day N.P.J."/>
            <person name="Enright M.C."/>
            <person name="Foster T.J."/>
            <person name="Moore C.E."/>
            <person name="Hurst L."/>
            <person name="Atkin R."/>
            <person name="Barron A."/>
            <person name="Bason N."/>
            <person name="Bentley S.D."/>
            <person name="Chillingworth C."/>
            <person name="Chillingworth T."/>
            <person name="Churcher C."/>
            <person name="Clark L."/>
            <person name="Corton C."/>
            <person name="Cronin A."/>
            <person name="Doggett J."/>
            <person name="Dowd L."/>
            <person name="Feltwell T."/>
            <person name="Hance Z."/>
            <person name="Harris B."/>
            <person name="Hauser H."/>
            <person name="Holroyd S."/>
            <person name="Jagels K."/>
            <person name="James K.D."/>
            <person name="Lennard N."/>
            <person name="Line A."/>
            <person name="Mayes R."/>
            <person name="Moule S."/>
            <person name="Mungall K."/>
            <person name="Ormond D."/>
            <person name="Quail M.A."/>
            <person name="Rabbinowitsch E."/>
            <person name="Rutherford K.M."/>
            <person name="Sanders M."/>
            <person name="Sharp S."/>
            <person name="Simmonds M."/>
            <person name="Stevens K."/>
            <person name="Whitehead S."/>
            <person name="Barrell B.G."/>
            <person name="Spratt B.G."/>
            <person name="Parkhill J."/>
        </authorList>
    </citation>
    <scope>NUCLEOTIDE SEQUENCE [LARGE SCALE GENOMIC DNA]</scope>
    <source>
        <strain>MRSA252</strain>
    </source>
</reference>
<feature type="chain" id="PRO_0000206477" description="UPF0735 ACT domain-containing protein SAR1723">
    <location>
        <begin position="1"/>
        <end position="152"/>
    </location>
</feature>
<feature type="domain" description="ACT" evidence="1">
    <location>
        <begin position="75"/>
        <end position="150"/>
    </location>
</feature>
<organism>
    <name type="scientific">Staphylococcus aureus (strain MRSA252)</name>
    <dbReference type="NCBI Taxonomy" id="282458"/>
    <lineage>
        <taxon>Bacteria</taxon>
        <taxon>Bacillati</taxon>
        <taxon>Bacillota</taxon>
        <taxon>Bacilli</taxon>
        <taxon>Bacillales</taxon>
        <taxon>Staphylococcaceae</taxon>
        <taxon>Staphylococcus</taxon>
    </lineage>
</organism>
<comment type="similarity">
    <text evidence="1">Belongs to the UPF0735 family.</text>
</comment>